<reference key="1">
    <citation type="journal article" date="1998" name="Science">
        <title>Complete genome sequence of Treponema pallidum, the syphilis spirochete.</title>
        <authorList>
            <person name="Fraser C.M."/>
            <person name="Norris S.J."/>
            <person name="Weinstock G.M."/>
            <person name="White O."/>
            <person name="Sutton G.G."/>
            <person name="Dodson R.J."/>
            <person name="Gwinn M.L."/>
            <person name="Hickey E.K."/>
            <person name="Clayton R.A."/>
            <person name="Ketchum K.A."/>
            <person name="Sodergren E."/>
            <person name="Hardham J.M."/>
            <person name="McLeod M.P."/>
            <person name="Salzberg S.L."/>
            <person name="Peterson J.D."/>
            <person name="Khalak H.G."/>
            <person name="Richardson D.L."/>
            <person name="Howell J.K."/>
            <person name="Chidambaram M."/>
            <person name="Utterback T.R."/>
            <person name="McDonald L.A."/>
            <person name="Artiach P."/>
            <person name="Bowman C."/>
            <person name="Cotton M.D."/>
            <person name="Fujii C."/>
            <person name="Garland S.A."/>
            <person name="Hatch B."/>
            <person name="Horst K."/>
            <person name="Roberts K.M."/>
            <person name="Sandusky M."/>
            <person name="Weidman J.F."/>
            <person name="Smith H.O."/>
            <person name="Venter J.C."/>
        </authorList>
    </citation>
    <scope>NUCLEOTIDE SEQUENCE [LARGE SCALE GENOMIC DNA]</scope>
    <source>
        <strain>Nichols</strain>
    </source>
</reference>
<sequence>MGVSDPVADMLTKIRNAARAGHEKVDVPSSKLKVEVVKILKTEGYIRNFRKVEEDGSGCIRVFLKYDDNETSVIHGIERISTPGRRVYSGYKTLRRVYNGYGTLIVSTSLGVTTGRHAREQRVGGELICKVW</sequence>
<organism>
    <name type="scientific">Treponema pallidum (strain Nichols)</name>
    <dbReference type="NCBI Taxonomy" id="243276"/>
    <lineage>
        <taxon>Bacteria</taxon>
        <taxon>Pseudomonadati</taxon>
        <taxon>Spirochaetota</taxon>
        <taxon>Spirochaetia</taxon>
        <taxon>Spirochaetales</taxon>
        <taxon>Treponemataceae</taxon>
        <taxon>Treponema</taxon>
    </lineage>
</organism>
<feature type="chain" id="PRO_0000126515" description="Small ribosomal subunit protein uS8">
    <location>
        <begin position="1"/>
        <end position="132"/>
    </location>
</feature>
<proteinExistence type="inferred from homology"/>
<keyword id="KW-1185">Reference proteome</keyword>
<keyword id="KW-0687">Ribonucleoprotein</keyword>
<keyword id="KW-0689">Ribosomal protein</keyword>
<keyword id="KW-0694">RNA-binding</keyword>
<keyword id="KW-0699">rRNA-binding</keyword>
<gene>
    <name evidence="1" type="primary">rpsH</name>
    <name type="ordered locus">TP_0203</name>
</gene>
<dbReference type="EMBL" id="AE000520">
    <property type="protein sequence ID" value="AAC65187.1"/>
    <property type="molecule type" value="Genomic_DNA"/>
</dbReference>
<dbReference type="PIR" id="E71356">
    <property type="entry name" value="E71356"/>
</dbReference>
<dbReference type="RefSeq" id="WP_010881650.1">
    <property type="nucleotide sequence ID" value="NC_021490.2"/>
</dbReference>
<dbReference type="SMR" id="O83233"/>
<dbReference type="STRING" id="243276.TP_0203"/>
<dbReference type="EnsemblBacteria" id="AAC65187">
    <property type="protein sequence ID" value="AAC65187"/>
    <property type="gene ID" value="TP_0203"/>
</dbReference>
<dbReference type="GeneID" id="93875990"/>
<dbReference type="KEGG" id="tpa:TP_0203"/>
<dbReference type="KEGG" id="tpw:TPANIC_0203"/>
<dbReference type="eggNOG" id="COG0096">
    <property type="taxonomic scope" value="Bacteria"/>
</dbReference>
<dbReference type="HOGENOM" id="CLU_098428_0_2_12"/>
<dbReference type="OrthoDB" id="9802617at2"/>
<dbReference type="Proteomes" id="UP000000811">
    <property type="component" value="Chromosome"/>
</dbReference>
<dbReference type="GO" id="GO:1990904">
    <property type="term" value="C:ribonucleoprotein complex"/>
    <property type="evidence" value="ECO:0007669"/>
    <property type="project" value="UniProtKB-KW"/>
</dbReference>
<dbReference type="GO" id="GO:0005840">
    <property type="term" value="C:ribosome"/>
    <property type="evidence" value="ECO:0007669"/>
    <property type="project" value="UniProtKB-KW"/>
</dbReference>
<dbReference type="GO" id="GO:0019843">
    <property type="term" value="F:rRNA binding"/>
    <property type="evidence" value="ECO:0007669"/>
    <property type="project" value="UniProtKB-UniRule"/>
</dbReference>
<dbReference type="GO" id="GO:0003735">
    <property type="term" value="F:structural constituent of ribosome"/>
    <property type="evidence" value="ECO:0007669"/>
    <property type="project" value="InterPro"/>
</dbReference>
<dbReference type="GO" id="GO:0006412">
    <property type="term" value="P:translation"/>
    <property type="evidence" value="ECO:0007669"/>
    <property type="project" value="UniProtKB-UniRule"/>
</dbReference>
<dbReference type="FunFam" id="3.30.1370.30:FF:000002">
    <property type="entry name" value="30S ribosomal protein S8"/>
    <property type="match status" value="1"/>
</dbReference>
<dbReference type="FunFam" id="3.30.1490.10:FF:000001">
    <property type="entry name" value="30S ribosomal protein S8"/>
    <property type="match status" value="1"/>
</dbReference>
<dbReference type="Gene3D" id="3.30.1370.30">
    <property type="match status" value="1"/>
</dbReference>
<dbReference type="Gene3D" id="3.30.1490.10">
    <property type="match status" value="1"/>
</dbReference>
<dbReference type="HAMAP" id="MF_01302_B">
    <property type="entry name" value="Ribosomal_uS8_B"/>
    <property type="match status" value="1"/>
</dbReference>
<dbReference type="InterPro" id="IPR000630">
    <property type="entry name" value="Ribosomal_uS8"/>
</dbReference>
<dbReference type="InterPro" id="IPR035987">
    <property type="entry name" value="Ribosomal_uS8_sf"/>
</dbReference>
<dbReference type="NCBIfam" id="NF001109">
    <property type="entry name" value="PRK00136.1"/>
    <property type="match status" value="1"/>
</dbReference>
<dbReference type="PANTHER" id="PTHR11758">
    <property type="entry name" value="40S RIBOSOMAL PROTEIN S15A"/>
    <property type="match status" value="1"/>
</dbReference>
<dbReference type="Pfam" id="PF00410">
    <property type="entry name" value="Ribosomal_S8"/>
    <property type="match status" value="1"/>
</dbReference>
<dbReference type="SUPFAM" id="SSF56047">
    <property type="entry name" value="Ribosomal protein S8"/>
    <property type="match status" value="1"/>
</dbReference>
<evidence type="ECO:0000255" key="1">
    <source>
        <dbReference type="HAMAP-Rule" id="MF_01302"/>
    </source>
</evidence>
<evidence type="ECO:0000305" key="2"/>
<protein>
    <recommendedName>
        <fullName evidence="1">Small ribosomal subunit protein uS8</fullName>
    </recommendedName>
    <alternativeName>
        <fullName evidence="2">30S ribosomal protein S8</fullName>
    </alternativeName>
</protein>
<name>RS8_TREPA</name>
<comment type="function">
    <text evidence="1">One of the primary rRNA binding proteins, it binds directly to 16S rRNA central domain where it helps coordinate assembly of the platform of the 30S subunit.</text>
</comment>
<comment type="subunit">
    <text evidence="1">Part of the 30S ribosomal subunit. Contacts proteins S5 and S12.</text>
</comment>
<comment type="similarity">
    <text evidence="1">Belongs to the universal ribosomal protein uS8 family.</text>
</comment>
<accession>O83233</accession>